<gene>
    <name evidence="1" type="primary">MDE1</name>
    <name type="ORF">LELG_04130</name>
</gene>
<comment type="function">
    <text evidence="1">Catalyzes the dehydration of methylthioribulose-1-phosphate (MTRu-1-P) into 2,3-diketo-5-methylthiopentyl-1-phosphate (DK-MTP-1-P).</text>
</comment>
<comment type="catalytic activity">
    <reaction evidence="1">
        <text>5-(methylsulfanyl)-D-ribulose 1-phosphate = 5-methylsulfanyl-2,3-dioxopentyl phosphate + H2O</text>
        <dbReference type="Rhea" id="RHEA:15549"/>
        <dbReference type="ChEBI" id="CHEBI:15377"/>
        <dbReference type="ChEBI" id="CHEBI:58548"/>
        <dbReference type="ChEBI" id="CHEBI:58828"/>
        <dbReference type="EC" id="4.2.1.109"/>
    </reaction>
</comment>
<comment type="cofactor">
    <cofactor evidence="1">
        <name>Zn(2+)</name>
        <dbReference type="ChEBI" id="CHEBI:29105"/>
    </cofactor>
    <text evidence="1">Binds 1 zinc ion per subunit.</text>
</comment>
<comment type="pathway">
    <text evidence="1">Amino-acid biosynthesis; L-methionine biosynthesis via salvage pathway; L-methionine from S-methyl-5-thio-alpha-D-ribose 1-phosphate: step 2/6.</text>
</comment>
<comment type="subcellular location">
    <subcellularLocation>
        <location evidence="1">Cytoplasm</location>
    </subcellularLocation>
</comment>
<comment type="similarity">
    <text evidence="1">Belongs to the aldolase class II family. MtnB subfamily.</text>
</comment>
<organism>
    <name type="scientific">Lodderomyces elongisporus (strain ATCC 11503 / CBS 2605 / JCM 1781 / NBRC 1676 / NRRL YB-4239)</name>
    <name type="common">Yeast</name>
    <name type="synonym">Saccharomyces elongisporus</name>
    <dbReference type="NCBI Taxonomy" id="379508"/>
    <lineage>
        <taxon>Eukaryota</taxon>
        <taxon>Fungi</taxon>
        <taxon>Dikarya</taxon>
        <taxon>Ascomycota</taxon>
        <taxon>Saccharomycotina</taxon>
        <taxon>Pichiomycetes</taxon>
        <taxon>Debaryomycetaceae</taxon>
        <taxon>Candida/Lodderomyces clade</taxon>
        <taxon>Lodderomyces</taxon>
    </lineage>
</organism>
<name>MTNB_LODEL</name>
<dbReference type="EC" id="4.2.1.109" evidence="1"/>
<dbReference type="EMBL" id="CH981528">
    <property type="protein sequence ID" value="EDK45951.1"/>
    <property type="molecule type" value="Genomic_DNA"/>
</dbReference>
<dbReference type="RefSeq" id="XP_001525098.1">
    <property type="nucleotide sequence ID" value="XM_001525048.1"/>
</dbReference>
<dbReference type="SMR" id="A5E3E3"/>
<dbReference type="FunCoup" id="A5E3E3">
    <property type="interactions" value="236"/>
</dbReference>
<dbReference type="STRING" id="379508.A5E3E3"/>
<dbReference type="GeneID" id="5232169"/>
<dbReference type="KEGG" id="lel:PVL30_004946"/>
<dbReference type="VEuPathDB" id="FungiDB:LELG_04130"/>
<dbReference type="eggNOG" id="KOG2631">
    <property type="taxonomic scope" value="Eukaryota"/>
</dbReference>
<dbReference type="HOGENOM" id="CLU_006033_4_0_1"/>
<dbReference type="InParanoid" id="A5E3E3"/>
<dbReference type="OMA" id="WFPGTSG"/>
<dbReference type="OrthoDB" id="191080at2759"/>
<dbReference type="UniPathway" id="UPA00904">
    <property type="reaction ID" value="UER00875"/>
</dbReference>
<dbReference type="Proteomes" id="UP000001996">
    <property type="component" value="Unassembled WGS sequence"/>
</dbReference>
<dbReference type="GO" id="GO:0005737">
    <property type="term" value="C:cytoplasm"/>
    <property type="evidence" value="ECO:0007669"/>
    <property type="project" value="UniProtKB-SubCell"/>
</dbReference>
<dbReference type="GO" id="GO:0046570">
    <property type="term" value="F:methylthioribulose 1-phosphate dehydratase activity"/>
    <property type="evidence" value="ECO:0007669"/>
    <property type="project" value="UniProtKB-UniRule"/>
</dbReference>
<dbReference type="GO" id="GO:0008270">
    <property type="term" value="F:zinc ion binding"/>
    <property type="evidence" value="ECO:0007669"/>
    <property type="project" value="UniProtKB-UniRule"/>
</dbReference>
<dbReference type="GO" id="GO:0019509">
    <property type="term" value="P:L-methionine salvage from methylthioadenosine"/>
    <property type="evidence" value="ECO:0007669"/>
    <property type="project" value="UniProtKB-UniRule"/>
</dbReference>
<dbReference type="FunFam" id="3.40.225.10:FF:000003">
    <property type="entry name" value="Methylthioribulose-1-phosphate dehydratase"/>
    <property type="match status" value="1"/>
</dbReference>
<dbReference type="Gene3D" id="3.40.225.10">
    <property type="entry name" value="Class II aldolase/adducin N-terminal domain"/>
    <property type="match status" value="1"/>
</dbReference>
<dbReference type="HAMAP" id="MF_03116">
    <property type="entry name" value="Salvage_MtnB_euk"/>
    <property type="match status" value="1"/>
</dbReference>
<dbReference type="InterPro" id="IPR001303">
    <property type="entry name" value="Aldolase_II/adducin_N"/>
</dbReference>
<dbReference type="InterPro" id="IPR036409">
    <property type="entry name" value="Aldolase_II/adducin_N_sf"/>
</dbReference>
<dbReference type="InterPro" id="IPR017714">
    <property type="entry name" value="MethylthioRu-1-P_deHdtase_MtnB"/>
</dbReference>
<dbReference type="InterPro" id="IPR027514">
    <property type="entry name" value="Salvage_MtnB_euk"/>
</dbReference>
<dbReference type="NCBIfam" id="TIGR03328">
    <property type="entry name" value="salvage_mtnB"/>
    <property type="match status" value="1"/>
</dbReference>
<dbReference type="PANTHER" id="PTHR10640">
    <property type="entry name" value="METHYLTHIORIBULOSE-1-PHOSPHATE DEHYDRATASE"/>
    <property type="match status" value="1"/>
</dbReference>
<dbReference type="PANTHER" id="PTHR10640:SF7">
    <property type="entry name" value="METHYLTHIORIBULOSE-1-PHOSPHATE DEHYDRATASE"/>
    <property type="match status" value="1"/>
</dbReference>
<dbReference type="Pfam" id="PF00596">
    <property type="entry name" value="Aldolase_II"/>
    <property type="match status" value="1"/>
</dbReference>
<dbReference type="SMART" id="SM01007">
    <property type="entry name" value="Aldolase_II"/>
    <property type="match status" value="1"/>
</dbReference>
<dbReference type="SUPFAM" id="SSF53639">
    <property type="entry name" value="AraD/HMP-PK domain-like"/>
    <property type="match status" value="1"/>
</dbReference>
<feature type="chain" id="PRO_0000393828" description="Methylthioribulose-1-phosphate dehydratase">
    <location>
        <begin position="1"/>
        <end position="275"/>
    </location>
</feature>
<feature type="active site" description="Proton donor/acceptor" evidence="1">
    <location>
        <position position="168"/>
    </location>
</feature>
<feature type="binding site" evidence="1">
    <location>
        <position position="125"/>
    </location>
    <ligand>
        <name>substrate</name>
    </ligand>
</feature>
<feature type="binding site" evidence="1">
    <location>
        <position position="143"/>
    </location>
    <ligand>
        <name>Zn(2+)</name>
        <dbReference type="ChEBI" id="CHEBI:29105"/>
    </ligand>
</feature>
<feature type="binding site" evidence="1">
    <location>
        <position position="145"/>
    </location>
    <ligand>
        <name>Zn(2+)</name>
        <dbReference type="ChEBI" id="CHEBI:29105"/>
    </ligand>
</feature>
<feature type="binding site" evidence="1">
    <location>
        <position position="233"/>
    </location>
    <ligand>
        <name>Zn(2+)</name>
        <dbReference type="ChEBI" id="CHEBI:29105"/>
    </ligand>
</feature>
<proteinExistence type="inferred from homology"/>
<accession>A5E3E3</accession>
<sequence>MSAPCNCTHADSQSLTNTNKSFQHLSPELQKQYSDPQHPANLICELCRLFYDNNWVTGTGGGISIRDVEGSNPNLVYIAPSGVQKERIQPWEMFLVELPDEKLLQTPNDIPKELTKSYKYKPSACTPLFMSCYKMRDAGACIHTHSQNAVMITLLLEGQKEFKISHIEQIKALPKLKYNEETKKVEKIGSLEYYDTLTIPIIENTPHEEDLTDSLQEAIRNYPGTSAVLVRRHGIYVWGETVWKAKVYNEAIDYLLELAIKMRQTGIPLVKNTST</sequence>
<evidence type="ECO:0000255" key="1">
    <source>
        <dbReference type="HAMAP-Rule" id="MF_03116"/>
    </source>
</evidence>
<keyword id="KW-0028">Amino-acid biosynthesis</keyword>
<keyword id="KW-0963">Cytoplasm</keyword>
<keyword id="KW-0456">Lyase</keyword>
<keyword id="KW-0479">Metal-binding</keyword>
<keyword id="KW-0486">Methionine biosynthesis</keyword>
<keyword id="KW-1185">Reference proteome</keyword>
<keyword id="KW-0862">Zinc</keyword>
<protein>
    <recommendedName>
        <fullName evidence="1">Methylthioribulose-1-phosphate dehydratase</fullName>
        <shortName evidence="1">MTRu-1-P dehydratase</shortName>
        <ecNumber evidence="1">4.2.1.109</ecNumber>
    </recommendedName>
</protein>
<reference key="1">
    <citation type="journal article" date="2009" name="Nature">
        <title>Evolution of pathogenicity and sexual reproduction in eight Candida genomes.</title>
        <authorList>
            <person name="Butler G."/>
            <person name="Rasmussen M.D."/>
            <person name="Lin M.F."/>
            <person name="Santos M.A.S."/>
            <person name="Sakthikumar S."/>
            <person name="Munro C.A."/>
            <person name="Rheinbay E."/>
            <person name="Grabherr M."/>
            <person name="Forche A."/>
            <person name="Reedy J.L."/>
            <person name="Agrafioti I."/>
            <person name="Arnaud M.B."/>
            <person name="Bates S."/>
            <person name="Brown A.J.P."/>
            <person name="Brunke S."/>
            <person name="Costanzo M.C."/>
            <person name="Fitzpatrick D.A."/>
            <person name="de Groot P.W.J."/>
            <person name="Harris D."/>
            <person name="Hoyer L.L."/>
            <person name="Hube B."/>
            <person name="Klis F.M."/>
            <person name="Kodira C."/>
            <person name="Lennard N."/>
            <person name="Logue M.E."/>
            <person name="Martin R."/>
            <person name="Neiman A.M."/>
            <person name="Nikolaou E."/>
            <person name="Quail M.A."/>
            <person name="Quinn J."/>
            <person name="Santos M.C."/>
            <person name="Schmitzberger F.F."/>
            <person name="Sherlock G."/>
            <person name="Shah P."/>
            <person name="Silverstein K.A.T."/>
            <person name="Skrzypek M.S."/>
            <person name="Soll D."/>
            <person name="Staggs R."/>
            <person name="Stansfield I."/>
            <person name="Stumpf M.P.H."/>
            <person name="Sudbery P.E."/>
            <person name="Srikantha T."/>
            <person name="Zeng Q."/>
            <person name="Berman J."/>
            <person name="Berriman M."/>
            <person name="Heitman J."/>
            <person name="Gow N.A.R."/>
            <person name="Lorenz M.C."/>
            <person name="Birren B.W."/>
            <person name="Kellis M."/>
            <person name="Cuomo C.A."/>
        </authorList>
    </citation>
    <scope>NUCLEOTIDE SEQUENCE [LARGE SCALE GENOMIC DNA]</scope>
    <source>
        <strain>ATCC 11503 / BCRC 21390 / CBS 2605 / JCM 1781 / NBRC 1676 / NRRL YB-4239</strain>
    </source>
</reference>